<keyword id="KW-0066">ATP synthesis</keyword>
<keyword id="KW-1003">Cell membrane</keyword>
<keyword id="KW-0139">CF(1)</keyword>
<keyword id="KW-0375">Hydrogen ion transport</keyword>
<keyword id="KW-0406">Ion transport</keyword>
<keyword id="KW-0472">Membrane</keyword>
<keyword id="KW-0813">Transport</keyword>
<comment type="function">
    <text evidence="1">Produces ATP from ADP in the presence of a proton gradient across the membrane.</text>
</comment>
<comment type="subunit">
    <text evidence="1">F-type ATPases have 2 components, CF(1) - the catalytic core - and CF(0) - the membrane proton channel. CF(1) has five subunits: alpha(3), beta(3), gamma(1), delta(1), epsilon(1). CF(0) has three main subunits: a, b and c.</text>
</comment>
<comment type="subcellular location">
    <subcellularLocation>
        <location evidence="1">Cell membrane</location>
        <topology evidence="1">Peripheral membrane protein</topology>
    </subcellularLocation>
</comment>
<comment type="similarity">
    <text evidence="1">Belongs to the ATPase epsilon chain family.</text>
</comment>
<reference key="1">
    <citation type="journal article" date="2011" name="J. Bacteriol.">
        <title>Genome sequence of lineage III Listeria monocytogenes strain HCC23.</title>
        <authorList>
            <person name="Steele C.L."/>
            <person name="Donaldson J.R."/>
            <person name="Paul D."/>
            <person name="Banes M.M."/>
            <person name="Arick T."/>
            <person name="Bridges S.M."/>
            <person name="Lawrence M.L."/>
        </authorList>
    </citation>
    <scope>NUCLEOTIDE SEQUENCE [LARGE SCALE GENOMIC DNA]</scope>
    <source>
        <strain>HCC23</strain>
    </source>
</reference>
<accession>B8DBI2</accession>
<dbReference type="EMBL" id="CP001175">
    <property type="protein sequence ID" value="ACK38433.1"/>
    <property type="molecule type" value="Genomic_DNA"/>
</dbReference>
<dbReference type="RefSeq" id="WP_003729247.1">
    <property type="nucleotide sequence ID" value="NC_011660.1"/>
</dbReference>
<dbReference type="SMR" id="B8DBI2"/>
<dbReference type="KEGG" id="lmh:LMHCC_0070"/>
<dbReference type="HOGENOM" id="CLU_084338_1_0_9"/>
<dbReference type="GO" id="GO:0005886">
    <property type="term" value="C:plasma membrane"/>
    <property type="evidence" value="ECO:0007669"/>
    <property type="project" value="UniProtKB-SubCell"/>
</dbReference>
<dbReference type="GO" id="GO:0045259">
    <property type="term" value="C:proton-transporting ATP synthase complex"/>
    <property type="evidence" value="ECO:0007669"/>
    <property type="project" value="UniProtKB-KW"/>
</dbReference>
<dbReference type="GO" id="GO:0005524">
    <property type="term" value="F:ATP binding"/>
    <property type="evidence" value="ECO:0007669"/>
    <property type="project" value="UniProtKB-UniRule"/>
</dbReference>
<dbReference type="GO" id="GO:0046933">
    <property type="term" value="F:proton-transporting ATP synthase activity, rotational mechanism"/>
    <property type="evidence" value="ECO:0007669"/>
    <property type="project" value="UniProtKB-UniRule"/>
</dbReference>
<dbReference type="CDD" id="cd12152">
    <property type="entry name" value="F1-ATPase_delta"/>
    <property type="match status" value="1"/>
</dbReference>
<dbReference type="FunFam" id="1.20.5.440:FF:000001">
    <property type="entry name" value="ATP synthase epsilon chain"/>
    <property type="match status" value="1"/>
</dbReference>
<dbReference type="FunFam" id="2.60.15.10:FF:000001">
    <property type="entry name" value="ATP synthase epsilon chain"/>
    <property type="match status" value="1"/>
</dbReference>
<dbReference type="Gene3D" id="1.20.5.440">
    <property type="entry name" value="ATP synthase delta/epsilon subunit, C-terminal domain"/>
    <property type="match status" value="1"/>
</dbReference>
<dbReference type="Gene3D" id="2.60.15.10">
    <property type="entry name" value="F0F1 ATP synthase delta/epsilon subunit, N-terminal"/>
    <property type="match status" value="1"/>
</dbReference>
<dbReference type="HAMAP" id="MF_00530">
    <property type="entry name" value="ATP_synth_epsil_bac"/>
    <property type="match status" value="1"/>
</dbReference>
<dbReference type="InterPro" id="IPR036794">
    <property type="entry name" value="ATP_F1_dsu/esu_C_sf"/>
</dbReference>
<dbReference type="InterPro" id="IPR001469">
    <property type="entry name" value="ATP_synth_F1_dsu/esu"/>
</dbReference>
<dbReference type="InterPro" id="IPR020546">
    <property type="entry name" value="ATP_synth_F1_dsu/esu_N"/>
</dbReference>
<dbReference type="InterPro" id="IPR020547">
    <property type="entry name" value="ATP_synth_F1_esu_C"/>
</dbReference>
<dbReference type="InterPro" id="IPR036771">
    <property type="entry name" value="ATPsynth_dsu/esu_N"/>
</dbReference>
<dbReference type="NCBIfam" id="TIGR01216">
    <property type="entry name" value="ATP_synt_epsi"/>
    <property type="match status" value="1"/>
</dbReference>
<dbReference type="NCBIfam" id="NF001846">
    <property type="entry name" value="PRK00571.1-3"/>
    <property type="match status" value="1"/>
</dbReference>
<dbReference type="NCBIfam" id="NF009977">
    <property type="entry name" value="PRK13442.1"/>
    <property type="match status" value="1"/>
</dbReference>
<dbReference type="PANTHER" id="PTHR13822">
    <property type="entry name" value="ATP SYNTHASE DELTA/EPSILON CHAIN"/>
    <property type="match status" value="1"/>
</dbReference>
<dbReference type="PANTHER" id="PTHR13822:SF10">
    <property type="entry name" value="ATP SYNTHASE EPSILON CHAIN, CHLOROPLASTIC"/>
    <property type="match status" value="1"/>
</dbReference>
<dbReference type="Pfam" id="PF00401">
    <property type="entry name" value="ATP-synt_DE"/>
    <property type="match status" value="1"/>
</dbReference>
<dbReference type="Pfam" id="PF02823">
    <property type="entry name" value="ATP-synt_DE_N"/>
    <property type="match status" value="1"/>
</dbReference>
<dbReference type="SUPFAM" id="SSF46604">
    <property type="entry name" value="Epsilon subunit of F1F0-ATP synthase C-terminal domain"/>
    <property type="match status" value="1"/>
</dbReference>
<dbReference type="SUPFAM" id="SSF51344">
    <property type="entry name" value="Epsilon subunit of F1F0-ATP synthase N-terminal domain"/>
    <property type="match status" value="1"/>
</dbReference>
<evidence type="ECO:0000255" key="1">
    <source>
        <dbReference type="HAMAP-Rule" id="MF_00530"/>
    </source>
</evidence>
<proteinExistence type="inferred from homology"/>
<organism>
    <name type="scientific">Listeria monocytogenes serotype 4a (strain HCC23)</name>
    <dbReference type="NCBI Taxonomy" id="552536"/>
    <lineage>
        <taxon>Bacteria</taxon>
        <taxon>Bacillati</taxon>
        <taxon>Bacillota</taxon>
        <taxon>Bacilli</taxon>
        <taxon>Bacillales</taxon>
        <taxon>Listeriaceae</taxon>
        <taxon>Listeria</taxon>
    </lineage>
</organism>
<protein>
    <recommendedName>
        <fullName evidence="1">ATP synthase epsilon chain</fullName>
    </recommendedName>
    <alternativeName>
        <fullName evidence="1">ATP synthase F1 sector epsilon subunit</fullName>
    </alternativeName>
    <alternativeName>
        <fullName evidence="1">F-ATPase epsilon subunit</fullName>
    </alternativeName>
</protein>
<gene>
    <name evidence="1" type="primary">atpC</name>
    <name type="ordered locus">LMHCC_0070</name>
</gene>
<feature type="chain" id="PRO_1000146335" description="ATP synthase epsilon chain">
    <location>
        <begin position="1"/>
        <end position="134"/>
    </location>
</feature>
<sequence>MGSLNVSIVTPDGPVYEGVAQMVIARTKAGELGILPGHVPLVAPLKIDIVRLKVESGEEWVAVNGGFMEVNGEEVNILADTAEREQDIDIDRAEKAKQRAEEELSRAKEQKVDEVLAQLALQRAINRIHAKEHN</sequence>
<name>ATPE_LISMH</name>